<gene>
    <name evidence="1" type="primary">groES</name>
    <name evidence="1" type="synonym">groS</name>
    <name type="synonym">mopB</name>
    <name type="ordered locus">BB_0741</name>
</gene>
<organism>
    <name type="scientific">Borreliella burgdorferi (strain ATCC 35210 / DSM 4680 / CIP 102532 / B31)</name>
    <name type="common">Borrelia burgdorferi</name>
    <dbReference type="NCBI Taxonomy" id="224326"/>
    <lineage>
        <taxon>Bacteria</taxon>
        <taxon>Pseudomonadati</taxon>
        <taxon>Spirochaetota</taxon>
        <taxon>Spirochaetia</taxon>
        <taxon>Spirochaetales</taxon>
        <taxon>Borreliaceae</taxon>
        <taxon>Borreliella</taxon>
    </lineage>
</organism>
<sequence>MKNIKPLADRVLIKIKEAESKTISGLYIPENAKEKTNIGTVIAVGSNKEEITVKVGDTVLYEKYAGAAVKIENKEHLILKAKEIVAIIEE</sequence>
<name>CH10_BORBU</name>
<dbReference type="EMBL" id="AE000783">
    <property type="protein sequence ID" value="AAC67092.2"/>
    <property type="molecule type" value="Genomic_DNA"/>
</dbReference>
<dbReference type="PIR" id="D70192">
    <property type="entry name" value="D70192"/>
</dbReference>
<dbReference type="RefSeq" id="NP_212875.2">
    <property type="nucleotide sequence ID" value="NC_001318.1"/>
</dbReference>
<dbReference type="RefSeq" id="WP_002557327.1">
    <property type="nucleotide sequence ID" value="NC_001318.1"/>
</dbReference>
<dbReference type="SMR" id="O51683"/>
<dbReference type="STRING" id="224326.BB_0741"/>
<dbReference type="PaxDb" id="224326-BB_0741"/>
<dbReference type="EnsemblBacteria" id="AAC67092">
    <property type="protein sequence ID" value="AAC67092"/>
    <property type="gene ID" value="BB_0741"/>
</dbReference>
<dbReference type="GeneID" id="56567550"/>
<dbReference type="KEGG" id="bbu:BB_0741"/>
<dbReference type="PATRIC" id="fig|224326.49.peg.1132"/>
<dbReference type="HOGENOM" id="CLU_132825_2_0_12"/>
<dbReference type="OrthoDB" id="9806791at2"/>
<dbReference type="Proteomes" id="UP000001807">
    <property type="component" value="Chromosome"/>
</dbReference>
<dbReference type="GO" id="GO:0005829">
    <property type="term" value="C:cytosol"/>
    <property type="evidence" value="ECO:0000314"/>
    <property type="project" value="CAFA"/>
</dbReference>
<dbReference type="GO" id="GO:0016020">
    <property type="term" value="C:membrane"/>
    <property type="evidence" value="ECO:0000314"/>
    <property type="project" value="CAFA"/>
</dbReference>
<dbReference type="GO" id="GO:0005524">
    <property type="term" value="F:ATP binding"/>
    <property type="evidence" value="ECO:0007669"/>
    <property type="project" value="InterPro"/>
</dbReference>
<dbReference type="GO" id="GO:0046872">
    <property type="term" value="F:metal ion binding"/>
    <property type="evidence" value="ECO:0007669"/>
    <property type="project" value="TreeGrafter"/>
</dbReference>
<dbReference type="GO" id="GO:0044183">
    <property type="term" value="F:protein folding chaperone"/>
    <property type="evidence" value="ECO:0007669"/>
    <property type="project" value="InterPro"/>
</dbReference>
<dbReference type="GO" id="GO:0051087">
    <property type="term" value="F:protein-folding chaperone binding"/>
    <property type="evidence" value="ECO:0007669"/>
    <property type="project" value="TreeGrafter"/>
</dbReference>
<dbReference type="GO" id="GO:0051082">
    <property type="term" value="F:unfolded protein binding"/>
    <property type="evidence" value="ECO:0007669"/>
    <property type="project" value="TreeGrafter"/>
</dbReference>
<dbReference type="GO" id="GO:0051085">
    <property type="term" value="P:chaperone cofactor-dependent protein refolding"/>
    <property type="evidence" value="ECO:0007669"/>
    <property type="project" value="TreeGrafter"/>
</dbReference>
<dbReference type="CDD" id="cd00320">
    <property type="entry name" value="cpn10"/>
    <property type="match status" value="1"/>
</dbReference>
<dbReference type="FunFam" id="2.30.33.40:FF:000016">
    <property type="entry name" value="10 kDa chaperonin"/>
    <property type="match status" value="1"/>
</dbReference>
<dbReference type="Gene3D" id="2.30.33.40">
    <property type="entry name" value="GroES chaperonin"/>
    <property type="match status" value="1"/>
</dbReference>
<dbReference type="HAMAP" id="MF_00580">
    <property type="entry name" value="CH10"/>
    <property type="match status" value="1"/>
</dbReference>
<dbReference type="InterPro" id="IPR020818">
    <property type="entry name" value="Chaperonin_GroES"/>
</dbReference>
<dbReference type="InterPro" id="IPR037124">
    <property type="entry name" value="Chaperonin_GroES_sf"/>
</dbReference>
<dbReference type="InterPro" id="IPR018369">
    <property type="entry name" value="Chaprnonin_Cpn10_CS"/>
</dbReference>
<dbReference type="InterPro" id="IPR011032">
    <property type="entry name" value="GroES-like_sf"/>
</dbReference>
<dbReference type="NCBIfam" id="NF001531">
    <property type="entry name" value="PRK00364.2-2"/>
    <property type="match status" value="1"/>
</dbReference>
<dbReference type="NCBIfam" id="NF001538">
    <property type="entry name" value="PRK00364.3-4"/>
    <property type="match status" value="1"/>
</dbReference>
<dbReference type="PANTHER" id="PTHR10772">
    <property type="entry name" value="10 KDA HEAT SHOCK PROTEIN"/>
    <property type="match status" value="1"/>
</dbReference>
<dbReference type="PANTHER" id="PTHR10772:SF58">
    <property type="entry name" value="CO-CHAPERONIN GROES"/>
    <property type="match status" value="1"/>
</dbReference>
<dbReference type="Pfam" id="PF00166">
    <property type="entry name" value="Cpn10"/>
    <property type="match status" value="1"/>
</dbReference>
<dbReference type="PRINTS" id="PR00297">
    <property type="entry name" value="CHAPERONIN10"/>
</dbReference>
<dbReference type="SMART" id="SM00883">
    <property type="entry name" value="Cpn10"/>
    <property type="match status" value="1"/>
</dbReference>
<dbReference type="SUPFAM" id="SSF50129">
    <property type="entry name" value="GroES-like"/>
    <property type="match status" value="1"/>
</dbReference>
<dbReference type="PROSITE" id="PS00681">
    <property type="entry name" value="CHAPERONINS_CPN10"/>
    <property type="match status" value="1"/>
</dbReference>
<reference key="1">
    <citation type="journal article" date="1997" name="Nature">
        <title>Genomic sequence of a Lyme disease spirochaete, Borrelia burgdorferi.</title>
        <authorList>
            <person name="Fraser C.M."/>
            <person name="Casjens S."/>
            <person name="Huang W.M."/>
            <person name="Sutton G.G."/>
            <person name="Clayton R.A."/>
            <person name="Lathigra R."/>
            <person name="White O."/>
            <person name="Ketchum K.A."/>
            <person name="Dodson R.J."/>
            <person name="Hickey E.K."/>
            <person name="Gwinn M.L."/>
            <person name="Dougherty B.A."/>
            <person name="Tomb J.-F."/>
            <person name="Fleischmann R.D."/>
            <person name="Richardson D.L."/>
            <person name="Peterson J.D."/>
            <person name="Kerlavage A.R."/>
            <person name="Quackenbush J."/>
            <person name="Salzberg S.L."/>
            <person name="Hanson M."/>
            <person name="van Vugt R."/>
            <person name="Palmer N."/>
            <person name="Adams M.D."/>
            <person name="Gocayne J.D."/>
            <person name="Weidman J.F."/>
            <person name="Utterback T.R."/>
            <person name="Watthey L."/>
            <person name="McDonald L.A."/>
            <person name="Artiach P."/>
            <person name="Bowman C."/>
            <person name="Garland S.A."/>
            <person name="Fujii C."/>
            <person name="Cotton M.D."/>
            <person name="Horst K."/>
            <person name="Roberts K.M."/>
            <person name="Hatch B."/>
            <person name="Smith H.O."/>
            <person name="Venter J.C."/>
        </authorList>
    </citation>
    <scope>NUCLEOTIDE SEQUENCE [LARGE SCALE GENOMIC DNA]</scope>
    <source>
        <strain>ATCC 35210 / DSM 4680 / CIP 102532 / B31</strain>
    </source>
</reference>
<feature type="chain" id="PRO_0000174701" description="Co-chaperonin GroES">
    <location>
        <begin position="1"/>
        <end position="90"/>
    </location>
</feature>
<evidence type="ECO:0000255" key="1">
    <source>
        <dbReference type="HAMAP-Rule" id="MF_00580"/>
    </source>
</evidence>
<evidence type="ECO:0000305" key="2"/>
<proteinExistence type="inferred from homology"/>
<protein>
    <recommendedName>
        <fullName evidence="1">Co-chaperonin GroES</fullName>
    </recommendedName>
    <alternativeName>
        <fullName evidence="1">10 kDa chaperonin</fullName>
    </alternativeName>
    <alternativeName>
        <fullName evidence="1">Chaperonin-10</fullName>
        <shortName evidence="1">Cpn10</shortName>
    </alternativeName>
</protein>
<keyword id="KW-0143">Chaperone</keyword>
<keyword id="KW-0963">Cytoplasm</keyword>
<keyword id="KW-1185">Reference proteome</keyword>
<comment type="function">
    <text evidence="1">Together with the chaperonin GroEL, plays an essential role in assisting protein folding. The GroEL-GroES system forms a nano-cage that allows encapsulation of the non-native substrate proteins and provides a physical environment optimized to promote and accelerate protein folding. GroES binds to the apical surface of the GroEL ring, thereby capping the opening of the GroEL channel.</text>
</comment>
<comment type="subunit">
    <text evidence="1">Heptamer of 7 subunits arranged in a ring. Interacts with the chaperonin GroEL.</text>
</comment>
<comment type="subcellular location">
    <subcellularLocation>
        <location evidence="1">Cytoplasm</location>
    </subcellularLocation>
</comment>
<comment type="similarity">
    <text evidence="1 2">Belongs to the GroES chaperonin family.</text>
</comment>
<accession>O51683</accession>